<reference key="1">
    <citation type="journal article" date="2005" name="PLoS Biol.">
        <title>The genome sequence of Rickettsia felis identifies the first putative conjugative plasmid in an obligate intracellular parasite.</title>
        <authorList>
            <person name="Ogata H."/>
            <person name="Renesto P."/>
            <person name="Audic S."/>
            <person name="Robert C."/>
            <person name="Blanc G."/>
            <person name="Fournier P.-E."/>
            <person name="Parinello H."/>
            <person name="Claverie J.-M."/>
            <person name="Raoult D."/>
        </authorList>
    </citation>
    <scope>NUCLEOTIDE SEQUENCE [LARGE SCALE GENOMIC DNA]</scope>
    <source>
        <strain>ATCC VR-1525 / URRWXCal2</strain>
    </source>
</reference>
<proteinExistence type="inferred from homology"/>
<gene>
    <name type="primary">uvrD</name>
    <name type="ordered locus">RF_0687</name>
</gene>
<evidence type="ECO:0000250" key="1"/>
<evidence type="ECO:0000255" key="2">
    <source>
        <dbReference type="PROSITE-ProRule" id="PRU00560"/>
    </source>
</evidence>
<evidence type="ECO:0000255" key="3">
    <source>
        <dbReference type="PROSITE-ProRule" id="PRU00617"/>
    </source>
</evidence>
<evidence type="ECO:0000305" key="4"/>
<sequence length="654" mass="75134">MLNNQDFIHTLNPQQQKAVLHTKGPLLLLAGAGTGKTKVLTSRIANIVHQNLASPQNILAVTFTNKAAKEMAERVNSLINCYGLNIGTFHSMAARILRDQIEHLNLGLNNRFTIISHDDQLKLVKDIVKLKDIDTKKYAPKLIHIIISRWKDQGLLPSKLSASDTNLPLQRVAKLVYEEYQKNLLISNVLDFGDLLLYNNELFIKNPEILRYYQEKYRYILIDEYQDTNVVQYLWARMLASLYKNICCVGDDDQSIYGWRGAEVGNILRFEKDFAGATIIKLEQNYRSTLPILAAASNVINNNKNRHGKTLWTDRESGEKIKIISCWSDKEEARYIAGEIDKLVREDRYNAGNIAILVRAGFQTRSFEEAFINSAMPYKIIGGLRFYERMEIRDVLAYIRISLNQNDNLALERIINVPKRAIGAASLNKIRVYALERNISNFAAIKEMLEMGEIKAKPYETLKDLVTKIDNWHERFSIDAPINVVKAILDDSGYLEMLQEEKTEEAFGRIENINEMLRAIAEFNDIHDFIEHSSLVMENEVLETNYGGSVTIMTLHAAKGLEFDVVFLPGWEEGVFPSQRSLDEEGEKGLEEERRIAYVGITRAKKDLYITHAESRKIFYEIVRSYPSRFITEIPDEITIRTSSMKKYNSFYKF</sequence>
<feature type="chain" id="PRO_0000286460" description="Probable DNA helicase II homolog">
    <location>
        <begin position="1"/>
        <end position="654"/>
    </location>
</feature>
<feature type="domain" description="UvrD-like helicase ATP-binding" evidence="2">
    <location>
        <begin position="9"/>
        <end position="289"/>
    </location>
</feature>
<feature type="domain" description="UvrD-like helicase C-terminal" evidence="3">
    <location>
        <begin position="290"/>
        <end position="560"/>
    </location>
</feature>
<feature type="binding site" evidence="2">
    <location>
        <begin position="33"/>
        <end position="38"/>
    </location>
    <ligand>
        <name>ATP</name>
        <dbReference type="ChEBI" id="CHEBI:30616"/>
    </ligand>
</feature>
<feature type="binding site" evidence="1">
    <location>
        <position position="287"/>
    </location>
    <ligand>
        <name>ATP</name>
        <dbReference type="ChEBI" id="CHEBI:30616"/>
    </ligand>
</feature>
<protein>
    <recommendedName>
        <fullName>Probable DNA helicase II homolog</fullName>
        <ecNumber>5.6.2.4</ecNumber>
    </recommendedName>
    <alternativeName>
        <fullName evidence="4">DNA 3'-5' helicase II</fullName>
    </alternativeName>
</protein>
<dbReference type="EC" id="5.6.2.4"/>
<dbReference type="EMBL" id="CP000053">
    <property type="protein sequence ID" value="AAY61538.1"/>
    <property type="molecule type" value="Genomic_DNA"/>
</dbReference>
<dbReference type="SMR" id="Q4ULN5"/>
<dbReference type="STRING" id="315456.RF_0687"/>
<dbReference type="KEGG" id="rfe:RF_0687"/>
<dbReference type="eggNOG" id="COG0210">
    <property type="taxonomic scope" value="Bacteria"/>
</dbReference>
<dbReference type="HOGENOM" id="CLU_004585_5_10_5"/>
<dbReference type="OrthoDB" id="9806690at2"/>
<dbReference type="Proteomes" id="UP000008548">
    <property type="component" value="Chromosome"/>
</dbReference>
<dbReference type="GO" id="GO:0005829">
    <property type="term" value="C:cytosol"/>
    <property type="evidence" value="ECO:0007669"/>
    <property type="project" value="TreeGrafter"/>
</dbReference>
<dbReference type="GO" id="GO:0033202">
    <property type="term" value="C:DNA helicase complex"/>
    <property type="evidence" value="ECO:0007669"/>
    <property type="project" value="TreeGrafter"/>
</dbReference>
<dbReference type="GO" id="GO:0043138">
    <property type="term" value="F:3'-5' DNA helicase activity"/>
    <property type="evidence" value="ECO:0007669"/>
    <property type="project" value="TreeGrafter"/>
</dbReference>
<dbReference type="GO" id="GO:0005524">
    <property type="term" value="F:ATP binding"/>
    <property type="evidence" value="ECO:0007669"/>
    <property type="project" value="UniProtKB-KW"/>
</dbReference>
<dbReference type="GO" id="GO:0016887">
    <property type="term" value="F:ATP hydrolysis activity"/>
    <property type="evidence" value="ECO:0007669"/>
    <property type="project" value="RHEA"/>
</dbReference>
<dbReference type="GO" id="GO:0003677">
    <property type="term" value="F:DNA binding"/>
    <property type="evidence" value="ECO:0007669"/>
    <property type="project" value="UniProtKB-KW"/>
</dbReference>
<dbReference type="GO" id="GO:0006260">
    <property type="term" value="P:DNA replication"/>
    <property type="evidence" value="ECO:0007669"/>
    <property type="project" value="UniProtKB-KW"/>
</dbReference>
<dbReference type="GO" id="GO:0000725">
    <property type="term" value="P:recombinational repair"/>
    <property type="evidence" value="ECO:0007669"/>
    <property type="project" value="TreeGrafter"/>
</dbReference>
<dbReference type="CDD" id="cd17932">
    <property type="entry name" value="DEXQc_UvrD"/>
    <property type="match status" value="1"/>
</dbReference>
<dbReference type="CDD" id="cd18807">
    <property type="entry name" value="SF1_C_UvrD"/>
    <property type="match status" value="1"/>
</dbReference>
<dbReference type="FunFam" id="3.40.50.300:FF:001890">
    <property type="entry name" value="DNA helicase"/>
    <property type="match status" value="1"/>
</dbReference>
<dbReference type="Gene3D" id="1.10.10.160">
    <property type="match status" value="1"/>
</dbReference>
<dbReference type="Gene3D" id="3.40.50.300">
    <property type="entry name" value="P-loop containing nucleotide triphosphate hydrolases"/>
    <property type="match status" value="2"/>
</dbReference>
<dbReference type="Gene3D" id="1.10.486.10">
    <property type="entry name" value="PCRA, domain 4"/>
    <property type="match status" value="1"/>
</dbReference>
<dbReference type="InterPro" id="IPR005751">
    <property type="entry name" value="ATP-dep_DNA_helicase_PcrA"/>
</dbReference>
<dbReference type="InterPro" id="IPR013986">
    <property type="entry name" value="DExx_box_DNA_helicase_dom_sf"/>
</dbReference>
<dbReference type="InterPro" id="IPR014017">
    <property type="entry name" value="DNA_helicase_UvrD-like_C"/>
</dbReference>
<dbReference type="InterPro" id="IPR000212">
    <property type="entry name" value="DNA_helicase_UvrD/REP"/>
</dbReference>
<dbReference type="InterPro" id="IPR027417">
    <property type="entry name" value="P-loop_NTPase"/>
</dbReference>
<dbReference type="InterPro" id="IPR014016">
    <property type="entry name" value="UvrD-like_ATP-bd"/>
</dbReference>
<dbReference type="NCBIfam" id="TIGR01073">
    <property type="entry name" value="pcrA"/>
    <property type="match status" value="1"/>
</dbReference>
<dbReference type="PANTHER" id="PTHR11070:SF2">
    <property type="entry name" value="ATP-DEPENDENT DNA HELICASE SRS2"/>
    <property type="match status" value="1"/>
</dbReference>
<dbReference type="PANTHER" id="PTHR11070">
    <property type="entry name" value="UVRD / RECB / PCRA DNA HELICASE FAMILY MEMBER"/>
    <property type="match status" value="1"/>
</dbReference>
<dbReference type="Pfam" id="PF00580">
    <property type="entry name" value="UvrD-helicase"/>
    <property type="match status" value="1"/>
</dbReference>
<dbReference type="Pfam" id="PF13361">
    <property type="entry name" value="UvrD_C"/>
    <property type="match status" value="1"/>
</dbReference>
<dbReference type="SUPFAM" id="SSF52540">
    <property type="entry name" value="P-loop containing nucleoside triphosphate hydrolases"/>
    <property type="match status" value="1"/>
</dbReference>
<dbReference type="PROSITE" id="PS51198">
    <property type="entry name" value="UVRD_HELICASE_ATP_BIND"/>
    <property type="match status" value="1"/>
</dbReference>
<dbReference type="PROSITE" id="PS51217">
    <property type="entry name" value="UVRD_HELICASE_CTER"/>
    <property type="match status" value="1"/>
</dbReference>
<name>UVRD_RICFE</name>
<keyword id="KW-0067">ATP-binding</keyword>
<keyword id="KW-0227">DNA damage</keyword>
<keyword id="KW-0234">DNA repair</keyword>
<keyword id="KW-0235">DNA replication</keyword>
<keyword id="KW-0238">DNA-binding</keyword>
<keyword id="KW-0347">Helicase</keyword>
<keyword id="KW-0378">Hydrolase</keyword>
<keyword id="KW-0413">Isomerase</keyword>
<keyword id="KW-0547">Nucleotide-binding</keyword>
<comment type="function">
    <text evidence="1">Has both ATPase and helicase activities. Unwinds DNA duplexes with 3' to 5' polarity with respect to the bound strand and initiates unwinding most effectively when a single-stranded region is present. Involved in the post-incision events of nucleotide excision repair and methyl-directed mismatch repair (By similarity).</text>
</comment>
<comment type="catalytic activity">
    <reaction>
        <text>Couples ATP hydrolysis with the unwinding of duplex DNA by translocating in the 3'-5' direction.</text>
        <dbReference type="EC" id="5.6.2.4"/>
    </reaction>
</comment>
<comment type="catalytic activity">
    <reaction>
        <text>ATP + H2O = ADP + phosphate + H(+)</text>
        <dbReference type="Rhea" id="RHEA:13065"/>
        <dbReference type="ChEBI" id="CHEBI:15377"/>
        <dbReference type="ChEBI" id="CHEBI:15378"/>
        <dbReference type="ChEBI" id="CHEBI:30616"/>
        <dbReference type="ChEBI" id="CHEBI:43474"/>
        <dbReference type="ChEBI" id="CHEBI:456216"/>
        <dbReference type="EC" id="5.6.2.4"/>
    </reaction>
</comment>
<comment type="similarity">
    <text evidence="4">Belongs to the helicase family. UvrD subfamily.</text>
</comment>
<organism>
    <name type="scientific">Rickettsia felis (strain ATCC VR-1525 / URRWXCal2)</name>
    <name type="common">Rickettsia azadi</name>
    <dbReference type="NCBI Taxonomy" id="315456"/>
    <lineage>
        <taxon>Bacteria</taxon>
        <taxon>Pseudomonadati</taxon>
        <taxon>Pseudomonadota</taxon>
        <taxon>Alphaproteobacteria</taxon>
        <taxon>Rickettsiales</taxon>
        <taxon>Rickettsiaceae</taxon>
        <taxon>Rickettsieae</taxon>
        <taxon>Rickettsia</taxon>
        <taxon>spotted fever group</taxon>
    </lineage>
</organism>
<accession>Q4ULN5</accession>